<proteinExistence type="inferred from homology"/>
<comment type="catalytic activity">
    <reaction evidence="1">
        <text>(S)-4-amino-5-oxopentanoate = 5-aminolevulinate</text>
        <dbReference type="Rhea" id="RHEA:14265"/>
        <dbReference type="ChEBI" id="CHEBI:57501"/>
        <dbReference type="ChEBI" id="CHEBI:356416"/>
        <dbReference type="EC" id="5.4.3.8"/>
    </reaction>
</comment>
<comment type="cofactor">
    <cofactor evidence="1">
        <name>pyridoxal 5'-phosphate</name>
        <dbReference type="ChEBI" id="CHEBI:597326"/>
    </cofactor>
</comment>
<comment type="pathway">
    <text evidence="1">Porphyrin-containing compound metabolism; protoporphyrin-IX biosynthesis; 5-aminolevulinate from L-glutamyl-tRNA(Glu): step 2/2.</text>
</comment>
<comment type="subunit">
    <text evidence="1">Homodimer.</text>
</comment>
<comment type="subcellular location">
    <subcellularLocation>
        <location evidence="1">Cytoplasm</location>
    </subcellularLocation>
</comment>
<comment type="similarity">
    <text evidence="1">Belongs to the class-III pyridoxal-phosphate-dependent aminotransferase family. HemL subfamily.</text>
</comment>
<dbReference type="EC" id="5.4.3.8" evidence="1"/>
<dbReference type="EMBL" id="CP000316">
    <property type="protein sequence ID" value="ABE43085.1"/>
    <property type="molecule type" value="Genomic_DNA"/>
</dbReference>
<dbReference type="RefSeq" id="WP_011482087.1">
    <property type="nucleotide sequence ID" value="NC_007948.1"/>
</dbReference>
<dbReference type="SMR" id="Q12EF7"/>
<dbReference type="STRING" id="296591.Bpro_1133"/>
<dbReference type="KEGG" id="pol:Bpro_1133"/>
<dbReference type="eggNOG" id="COG0001">
    <property type="taxonomic scope" value="Bacteria"/>
</dbReference>
<dbReference type="HOGENOM" id="CLU_016922_1_5_4"/>
<dbReference type="OrthoDB" id="3398487at2"/>
<dbReference type="UniPathway" id="UPA00251">
    <property type="reaction ID" value="UER00317"/>
</dbReference>
<dbReference type="Proteomes" id="UP000001983">
    <property type="component" value="Chromosome"/>
</dbReference>
<dbReference type="GO" id="GO:0005737">
    <property type="term" value="C:cytoplasm"/>
    <property type="evidence" value="ECO:0007669"/>
    <property type="project" value="UniProtKB-SubCell"/>
</dbReference>
<dbReference type="GO" id="GO:0042286">
    <property type="term" value="F:glutamate-1-semialdehyde 2,1-aminomutase activity"/>
    <property type="evidence" value="ECO:0007669"/>
    <property type="project" value="UniProtKB-UniRule"/>
</dbReference>
<dbReference type="GO" id="GO:0030170">
    <property type="term" value="F:pyridoxal phosphate binding"/>
    <property type="evidence" value="ECO:0007669"/>
    <property type="project" value="InterPro"/>
</dbReference>
<dbReference type="GO" id="GO:0008483">
    <property type="term" value="F:transaminase activity"/>
    <property type="evidence" value="ECO:0007669"/>
    <property type="project" value="InterPro"/>
</dbReference>
<dbReference type="GO" id="GO:0006782">
    <property type="term" value="P:protoporphyrinogen IX biosynthetic process"/>
    <property type="evidence" value="ECO:0007669"/>
    <property type="project" value="UniProtKB-UniRule"/>
</dbReference>
<dbReference type="CDD" id="cd00610">
    <property type="entry name" value="OAT_like"/>
    <property type="match status" value="1"/>
</dbReference>
<dbReference type="FunFam" id="3.40.640.10:FF:000021">
    <property type="entry name" value="Glutamate-1-semialdehyde 2,1-aminomutase"/>
    <property type="match status" value="1"/>
</dbReference>
<dbReference type="Gene3D" id="3.90.1150.10">
    <property type="entry name" value="Aspartate Aminotransferase, domain 1"/>
    <property type="match status" value="1"/>
</dbReference>
<dbReference type="Gene3D" id="3.40.640.10">
    <property type="entry name" value="Type I PLP-dependent aspartate aminotransferase-like (Major domain)"/>
    <property type="match status" value="1"/>
</dbReference>
<dbReference type="HAMAP" id="MF_00375">
    <property type="entry name" value="HemL_aminotrans_3"/>
    <property type="match status" value="1"/>
</dbReference>
<dbReference type="InterPro" id="IPR004639">
    <property type="entry name" value="4pyrrol_synth_GluAld_NH2Trfase"/>
</dbReference>
<dbReference type="InterPro" id="IPR005814">
    <property type="entry name" value="Aminotrans_3"/>
</dbReference>
<dbReference type="InterPro" id="IPR015424">
    <property type="entry name" value="PyrdxlP-dep_Trfase"/>
</dbReference>
<dbReference type="InterPro" id="IPR015421">
    <property type="entry name" value="PyrdxlP-dep_Trfase_major"/>
</dbReference>
<dbReference type="InterPro" id="IPR015422">
    <property type="entry name" value="PyrdxlP-dep_Trfase_small"/>
</dbReference>
<dbReference type="NCBIfam" id="TIGR00713">
    <property type="entry name" value="hemL"/>
    <property type="match status" value="1"/>
</dbReference>
<dbReference type="NCBIfam" id="NF000818">
    <property type="entry name" value="PRK00062.1"/>
    <property type="match status" value="1"/>
</dbReference>
<dbReference type="PANTHER" id="PTHR43713">
    <property type="entry name" value="GLUTAMATE-1-SEMIALDEHYDE 2,1-AMINOMUTASE"/>
    <property type="match status" value="1"/>
</dbReference>
<dbReference type="PANTHER" id="PTHR43713:SF3">
    <property type="entry name" value="GLUTAMATE-1-SEMIALDEHYDE 2,1-AMINOMUTASE 1, CHLOROPLASTIC-RELATED"/>
    <property type="match status" value="1"/>
</dbReference>
<dbReference type="Pfam" id="PF00202">
    <property type="entry name" value="Aminotran_3"/>
    <property type="match status" value="1"/>
</dbReference>
<dbReference type="SUPFAM" id="SSF53383">
    <property type="entry name" value="PLP-dependent transferases"/>
    <property type="match status" value="1"/>
</dbReference>
<feature type="chain" id="PRO_0000382356" description="Glutamate-1-semialdehyde 2,1-aminomutase">
    <location>
        <begin position="1"/>
        <end position="442"/>
    </location>
</feature>
<feature type="modified residue" description="N6-(pyridoxal phosphate)lysine" evidence="1">
    <location>
        <position position="282"/>
    </location>
</feature>
<organism>
    <name type="scientific">Polaromonas sp. (strain JS666 / ATCC BAA-500)</name>
    <dbReference type="NCBI Taxonomy" id="296591"/>
    <lineage>
        <taxon>Bacteria</taxon>
        <taxon>Pseudomonadati</taxon>
        <taxon>Pseudomonadota</taxon>
        <taxon>Betaproteobacteria</taxon>
        <taxon>Burkholderiales</taxon>
        <taxon>Comamonadaceae</taxon>
        <taxon>Polaromonas</taxon>
    </lineage>
</organism>
<keyword id="KW-0963">Cytoplasm</keyword>
<keyword id="KW-0413">Isomerase</keyword>
<keyword id="KW-0627">Porphyrin biosynthesis</keyword>
<keyword id="KW-0663">Pyridoxal phosphate</keyword>
<keyword id="KW-1185">Reference proteome</keyword>
<reference key="1">
    <citation type="journal article" date="2008" name="Appl. Environ. Microbiol.">
        <title>The genome of Polaromonas sp. strain JS666: insights into the evolution of a hydrocarbon- and xenobiotic-degrading bacterium, and features of relevance to biotechnology.</title>
        <authorList>
            <person name="Mattes T.E."/>
            <person name="Alexander A.K."/>
            <person name="Richardson P.M."/>
            <person name="Munk A.C."/>
            <person name="Han C.S."/>
            <person name="Stothard P."/>
            <person name="Coleman N.V."/>
        </authorList>
    </citation>
    <scope>NUCLEOTIDE SEQUENCE [LARGE SCALE GENOMIC DNA]</scope>
    <source>
        <strain>JS666 / ATCC BAA-500</strain>
    </source>
</reference>
<protein>
    <recommendedName>
        <fullName evidence="1">Glutamate-1-semialdehyde 2,1-aminomutase</fullName>
        <shortName evidence="1">GSA</shortName>
        <ecNumber evidence="1">5.4.3.8</ecNumber>
    </recommendedName>
    <alternativeName>
        <fullName evidence="1">Glutamate-1-semialdehyde aminotransferase</fullName>
        <shortName evidence="1">GSA-AT</shortName>
    </alternativeName>
</protein>
<name>GSA_POLSJ</name>
<evidence type="ECO:0000255" key="1">
    <source>
        <dbReference type="HAMAP-Rule" id="MF_00375"/>
    </source>
</evidence>
<gene>
    <name evidence="1" type="primary">hemL</name>
    <name type="ordered locus">Bpro_1133</name>
</gene>
<sequence length="442" mass="46774">MEPQNIKPHTPELSRNTALFERAKKLIPGGVNSPVRAFKAVGGTPRFVQRAQGAYFWDADDQRYIDYIGSWGPMILGHGHPAVLASVQKALLDGFSYGAPTEREVELAEELVRLVPSLEMVRLVSSGTEAAMSAIRLARGATGRSKIIKFEGCYHGHADALLVKAGSGLATFGNPTSAGVPPEVVQHTLVLEYNHLAQLEEAFALHGSAIACLMIEPIAGNMNFVRASIPFMQRCRELCTQYGALLVFDEVMTGFRVALGGAQSVYAKSIPGFKPDMTVLGKVIGGGMPLAAFGGTRAVMEQLAPLGPVYQAGTLSGNPVATACGLATLREIQKPGFYEALGERTRGLVAGLTQAANKAGVPFCGDSEGGMFGFFLLGQLPQNYATVMTTDGPAFNRFFHAMLASGVYYAPALYEAGFVSSAHSAADIEATVDAAAKFFAGA</sequence>
<accession>Q12EF7</accession>